<protein>
    <recommendedName>
        <fullName evidence="1">Sperm equatorial segment protein 1</fullName>
    </recommendedName>
</protein>
<dbReference type="EMBL" id="BC127527">
    <property type="protein sequence ID" value="AAI27528.1"/>
    <property type="molecule type" value="mRNA"/>
</dbReference>
<dbReference type="RefSeq" id="NP_001071150.1">
    <property type="nucleotide sequence ID" value="NM_001077682.1"/>
</dbReference>
<dbReference type="SMR" id="A0JPP4"/>
<dbReference type="FunCoup" id="A0JPP4">
    <property type="interactions" value="28"/>
</dbReference>
<dbReference type="STRING" id="10116.ENSRNOP00000043936"/>
<dbReference type="GlyCosmos" id="A0JPP4">
    <property type="glycosylation" value="1 site, No reported glycans"/>
</dbReference>
<dbReference type="GlyGen" id="A0JPP4">
    <property type="glycosylation" value="1 site"/>
</dbReference>
<dbReference type="PhosphoSitePlus" id="A0JPP4"/>
<dbReference type="PaxDb" id="10116-ENSRNOP00000043936"/>
<dbReference type="Ensembl" id="ENSRNOT00000049441.4">
    <property type="protein sequence ID" value="ENSRNOP00000043936.3"/>
    <property type="gene ID" value="ENSRNOG00000025359.5"/>
</dbReference>
<dbReference type="GeneID" id="501010"/>
<dbReference type="KEGG" id="rno:501010"/>
<dbReference type="UCSC" id="RGD:1563468">
    <property type="organism name" value="rat"/>
</dbReference>
<dbReference type="AGR" id="RGD:1563468"/>
<dbReference type="CTD" id="246777"/>
<dbReference type="RGD" id="1563468">
    <property type="gene designation" value="Spesp1"/>
</dbReference>
<dbReference type="eggNOG" id="ENOG502SG7W">
    <property type="taxonomic scope" value="Eukaryota"/>
</dbReference>
<dbReference type="GeneTree" id="ENSGT00390000005362"/>
<dbReference type="HOGENOM" id="CLU_787463_0_0_1"/>
<dbReference type="InParanoid" id="A0JPP4"/>
<dbReference type="OMA" id="TESTAFW"/>
<dbReference type="OrthoDB" id="9530574at2759"/>
<dbReference type="PhylomeDB" id="A0JPP4"/>
<dbReference type="TreeFam" id="TF337441"/>
<dbReference type="PRO" id="PR:A0JPP4"/>
<dbReference type="Proteomes" id="UP000002494">
    <property type="component" value="Chromosome 8"/>
</dbReference>
<dbReference type="Bgee" id="ENSRNOG00000025359">
    <property type="expression patterns" value="Expressed in testis and 7 other cell types or tissues"/>
</dbReference>
<dbReference type="GO" id="GO:0001669">
    <property type="term" value="C:acrosomal vesicle"/>
    <property type="evidence" value="ECO:0000266"/>
    <property type="project" value="RGD"/>
</dbReference>
<dbReference type="GO" id="GO:0007340">
    <property type="term" value="P:acrosome reaction"/>
    <property type="evidence" value="ECO:0000266"/>
    <property type="project" value="RGD"/>
</dbReference>
<dbReference type="GO" id="GO:0009566">
    <property type="term" value="P:fertilization"/>
    <property type="evidence" value="ECO:0000250"/>
    <property type="project" value="UniProtKB"/>
</dbReference>
<dbReference type="GO" id="GO:0007342">
    <property type="term" value="P:fusion of sperm to egg plasma membrane involved in single fertilization"/>
    <property type="evidence" value="ECO:0000266"/>
    <property type="project" value="RGD"/>
</dbReference>
<dbReference type="GO" id="GO:0035036">
    <property type="term" value="P:sperm-egg recognition"/>
    <property type="evidence" value="ECO:0000250"/>
    <property type="project" value="UniProtKB"/>
</dbReference>
<dbReference type="InterPro" id="IPR026743">
    <property type="entry name" value="Equatorial_segment"/>
</dbReference>
<dbReference type="PANTHER" id="PTHR31667">
    <property type="entry name" value="SPERM EQUATORIAL SEGMENT PROTEIN 1"/>
    <property type="match status" value="1"/>
</dbReference>
<dbReference type="PANTHER" id="PTHR31667:SF2">
    <property type="entry name" value="SPERM EQUATORIAL SEGMENT PROTEIN 1"/>
    <property type="match status" value="1"/>
</dbReference>
<dbReference type="Pfam" id="PF15754">
    <property type="entry name" value="SPESP1"/>
    <property type="match status" value="1"/>
</dbReference>
<evidence type="ECO:0000250" key="1">
    <source>
        <dbReference type="UniProtKB" id="Q6UW49"/>
    </source>
</evidence>
<evidence type="ECO:0000250" key="2">
    <source>
        <dbReference type="UniProtKB" id="Q9D5A0"/>
    </source>
</evidence>
<evidence type="ECO:0000255" key="3"/>
<evidence type="ECO:0000256" key="4">
    <source>
        <dbReference type="SAM" id="MobiDB-lite"/>
    </source>
</evidence>
<evidence type="ECO:0000312" key="5">
    <source>
        <dbReference type="EMBL" id="AAI27528.1"/>
    </source>
</evidence>
<evidence type="ECO:0000312" key="6">
    <source>
        <dbReference type="RGD" id="1563468"/>
    </source>
</evidence>
<reference evidence="5" key="1">
    <citation type="journal article" date="2004" name="Genome Res.">
        <title>The status, quality, and expansion of the NIH full-length cDNA project: the Mammalian Gene Collection (MGC).</title>
        <authorList>
            <consortium name="The MGC Project Team"/>
        </authorList>
    </citation>
    <scope>NUCLEOTIDE SEQUENCE [LARGE SCALE MRNA]</scope>
    <source>
        <tissue evidence="5">Testis</tissue>
    </source>
</reference>
<organism>
    <name type="scientific">Rattus norvegicus</name>
    <name type="common">Rat</name>
    <dbReference type="NCBI Taxonomy" id="10116"/>
    <lineage>
        <taxon>Eukaryota</taxon>
        <taxon>Metazoa</taxon>
        <taxon>Chordata</taxon>
        <taxon>Craniata</taxon>
        <taxon>Vertebrata</taxon>
        <taxon>Euteleostomi</taxon>
        <taxon>Mammalia</taxon>
        <taxon>Eutheria</taxon>
        <taxon>Euarchontoglires</taxon>
        <taxon>Glires</taxon>
        <taxon>Rodentia</taxon>
        <taxon>Myomorpha</taxon>
        <taxon>Muroidea</taxon>
        <taxon>Muridae</taxon>
        <taxon>Murinae</taxon>
        <taxon>Rattus</taxon>
    </lineage>
</organism>
<name>SPESP_RAT</name>
<accession>A0JPP4</accession>
<comment type="function">
    <text evidence="2">Involved in fertilization ability of sperm.</text>
</comment>
<comment type="subcellular location">
    <subcellularLocation>
        <location evidence="1">Cytoplasmic vesicle</location>
        <location evidence="1">Secretory vesicle</location>
        <location evidence="1">Acrosome</location>
    </subcellularLocation>
    <text evidence="1 2">Small proacrosomal granules (during the Golgi phase), enlarged acrosomal vesicles (during the cap phase), acrosome (during the elongating phase), equatorial segment of the acrosome (during the maturation phase) (By similarity). After acrosome reaction localizes to the equatorial segment region in both noncapacitated and capacitated, acrosome-reacted sperm (By similarity).</text>
</comment>
<comment type="PTM">
    <text evidence="2">Glycosylated. In testis there are two predominant forms of 77- and 67-kDa and a form of 47-kDa, whereas in epididymal sperm from caput, corpus, and cauda there are two forms of 47- and 43-kDa. Testis forms contain complex carbohydrate residues. Epididymal sperm forms are N-glycosylated. Then undergoes significant glycosylation in the testis and that the majority of these glycoconjugates are removed by the time sperm reach the caput epididymis.</text>
</comment>
<comment type="similarity">
    <text evidence="3">Belongs to the SPESP1 family.</text>
</comment>
<keyword id="KW-0968">Cytoplasmic vesicle</keyword>
<keyword id="KW-0217">Developmental protein</keyword>
<keyword id="KW-0325">Glycoprotein</keyword>
<keyword id="KW-1185">Reference proteome</keyword>
<keyword id="KW-0732">Signal</keyword>
<sequence length="409" mass="45880">MKPVVLVALLWLWPSSFLAYPTATVLPDEEQNLNHYVQILQNLIMSVPTKEQGFGRKFRSSRTVDGAEARSLSSEMLLTPGLVSAQEVTTPETEVMLTSMVEKTTFPSSGFTMESEKRRTHSKAFWSIQPNNVSIVLHTEEPYIEKEPEPEPELETEEESRRLATEPEPEPESESAPETETRQTAESEEEVETSTAQNKVRTGTSRMSTVITQTTNTQGTPNTVTVKTINNLDVSTESEDVPQLSGQSEILNVEDLPGHHSLSTRHENILRKISNINSQIHQGLLSDHSSPAYKEFIKASREHLKRSLALAAAAEHKLQQMYGSNVFLDGHTSDPDDDMEVIINMLYNSRSKLSDYFTINHVPSELREKATVVIAVLKKILCVDQVEMQSLIRKLLSNNMKILNILNVP</sequence>
<proteinExistence type="evidence at transcript level"/>
<feature type="signal peptide" evidence="3">
    <location>
        <begin position="1"/>
        <end position="18"/>
    </location>
</feature>
<feature type="chain" id="PRO_0000274537" description="Sperm equatorial segment protein 1" evidence="3">
    <location>
        <begin position="19"/>
        <end position="409"/>
    </location>
</feature>
<feature type="region of interest" description="Disordered" evidence="4">
    <location>
        <begin position="141"/>
        <end position="223"/>
    </location>
</feature>
<feature type="compositionally biased region" description="Acidic residues" evidence="4">
    <location>
        <begin position="167"/>
        <end position="177"/>
    </location>
</feature>
<feature type="compositionally biased region" description="Polar residues" evidence="4">
    <location>
        <begin position="198"/>
        <end position="208"/>
    </location>
</feature>
<feature type="compositionally biased region" description="Low complexity" evidence="4">
    <location>
        <begin position="209"/>
        <end position="223"/>
    </location>
</feature>
<feature type="glycosylation site" description="N-linked (GlcNAc...) asparagine" evidence="3">
    <location>
        <position position="132"/>
    </location>
</feature>
<gene>
    <name evidence="6" type="primary">Spesp1</name>
</gene>